<feature type="chain" id="PRO_0000336286" description="UPF0102 protein XOO3839">
    <location>
        <begin position="1"/>
        <end position="122"/>
    </location>
</feature>
<gene>
    <name type="ordered locus">XOO3839</name>
</gene>
<sequence length="122" mass="13356">MPAARQQRGAGVEAAARALLEQAGLRLVVGNANYRGGELDLVMRDGQSLVFVEVRYRRDDRFGGGAASVDWRKRRKLVLAAQLFLGAHPALAALPCRFDVVDASGEPPVLHWIRDAFRADDC</sequence>
<evidence type="ECO:0000255" key="1">
    <source>
        <dbReference type="HAMAP-Rule" id="MF_00048"/>
    </source>
</evidence>
<evidence type="ECO:0000305" key="2"/>
<name>Y3839_XANOR</name>
<dbReference type="EMBL" id="AE013598">
    <property type="protein sequence ID" value="AAW77093.1"/>
    <property type="status" value="ALT_INIT"/>
    <property type="molecule type" value="Genomic_DNA"/>
</dbReference>
<dbReference type="SMR" id="Q5GW28"/>
<dbReference type="STRING" id="291331.XOO3839"/>
<dbReference type="KEGG" id="xoo:XOO3839"/>
<dbReference type="HOGENOM" id="CLU_115353_1_0_6"/>
<dbReference type="Proteomes" id="UP000006735">
    <property type="component" value="Chromosome"/>
</dbReference>
<dbReference type="GO" id="GO:0003676">
    <property type="term" value="F:nucleic acid binding"/>
    <property type="evidence" value="ECO:0007669"/>
    <property type="project" value="InterPro"/>
</dbReference>
<dbReference type="Gene3D" id="3.40.1350.10">
    <property type="match status" value="1"/>
</dbReference>
<dbReference type="HAMAP" id="MF_00048">
    <property type="entry name" value="UPF0102"/>
    <property type="match status" value="1"/>
</dbReference>
<dbReference type="InterPro" id="IPR011335">
    <property type="entry name" value="Restrct_endonuc-II-like"/>
</dbReference>
<dbReference type="InterPro" id="IPR011856">
    <property type="entry name" value="tRNA_endonuc-like_dom_sf"/>
</dbReference>
<dbReference type="InterPro" id="IPR003509">
    <property type="entry name" value="UPF0102_YraN-like"/>
</dbReference>
<dbReference type="NCBIfam" id="NF009150">
    <property type="entry name" value="PRK12497.1-3"/>
    <property type="match status" value="1"/>
</dbReference>
<dbReference type="NCBIfam" id="TIGR00252">
    <property type="entry name" value="YraN family protein"/>
    <property type="match status" value="1"/>
</dbReference>
<dbReference type="PANTHER" id="PTHR34039">
    <property type="entry name" value="UPF0102 PROTEIN YRAN"/>
    <property type="match status" value="1"/>
</dbReference>
<dbReference type="PANTHER" id="PTHR34039:SF1">
    <property type="entry name" value="UPF0102 PROTEIN YRAN"/>
    <property type="match status" value="1"/>
</dbReference>
<dbReference type="Pfam" id="PF02021">
    <property type="entry name" value="UPF0102"/>
    <property type="match status" value="1"/>
</dbReference>
<dbReference type="SUPFAM" id="SSF52980">
    <property type="entry name" value="Restriction endonuclease-like"/>
    <property type="match status" value="1"/>
</dbReference>
<accession>Q5GW28</accession>
<protein>
    <recommendedName>
        <fullName evidence="1">UPF0102 protein XOO3839</fullName>
    </recommendedName>
</protein>
<reference key="1">
    <citation type="journal article" date="2005" name="Nucleic Acids Res.">
        <title>The genome sequence of Xanthomonas oryzae pathovar oryzae KACC10331, the bacterial blight pathogen of rice.</title>
        <authorList>
            <person name="Lee B.-M."/>
            <person name="Park Y.-J."/>
            <person name="Park D.-S."/>
            <person name="Kang H.-W."/>
            <person name="Kim J.-G."/>
            <person name="Song E.-S."/>
            <person name="Park I.-C."/>
            <person name="Yoon U.-H."/>
            <person name="Hahn J.-H."/>
            <person name="Koo B.-S."/>
            <person name="Lee G.-B."/>
            <person name="Kim H."/>
            <person name="Park H.-S."/>
            <person name="Yoon K.-O."/>
            <person name="Kim J.-H."/>
            <person name="Jung C.-H."/>
            <person name="Koh N.-H."/>
            <person name="Seo J.-S."/>
            <person name="Go S.-J."/>
        </authorList>
    </citation>
    <scope>NUCLEOTIDE SEQUENCE [LARGE SCALE GENOMIC DNA]</scope>
    <source>
        <strain>KACC10331 / KXO85</strain>
    </source>
</reference>
<proteinExistence type="inferred from homology"/>
<comment type="similarity">
    <text evidence="1">Belongs to the UPF0102 family.</text>
</comment>
<comment type="sequence caution" evidence="2">
    <conflict type="erroneous initiation">
        <sequence resource="EMBL-CDS" id="AAW77093"/>
    </conflict>
</comment>
<keyword id="KW-1185">Reference proteome</keyword>
<organism>
    <name type="scientific">Xanthomonas oryzae pv. oryzae (strain KACC10331 / KXO85)</name>
    <dbReference type="NCBI Taxonomy" id="291331"/>
    <lineage>
        <taxon>Bacteria</taxon>
        <taxon>Pseudomonadati</taxon>
        <taxon>Pseudomonadota</taxon>
        <taxon>Gammaproteobacteria</taxon>
        <taxon>Lysobacterales</taxon>
        <taxon>Lysobacteraceae</taxon>
        <taxon>Xanthomonas</taxon>
    </lineage>
</organism>